<protein>
    <recommendedName>
        <fullName>Hemolysin E, chromosomal</fullName>
    </recommendedName>
    <alternativeName>
        <fullName>Cytotoxin ClyA</fullName>
    </alternativeName>
    <alternativeName>
        <fullName>Hemolysis-inducing protein</fullName>
    </alternativeName>
    <alternativeName>
        <fullName>Latent pore-forming 34 kDa hemolysin</fullName>
    </alternativeName>
    <alternativeName>
        <fullName>Silent hemolysin SheA</fullName>
    </alternativeName>
</protein>
<organism>
    <name type="scientific">Escherichia coli (strain K12)</name>
    <dbReference type="NCBI Taxonomy" id="83333"/>
    <lineage>
        <taxon>Bacteria</taxon>
        <taxon>Pseudomonadati</taxon>
        <taxon>Pseudomonadota</taxon>
        <taxon>Gammaproteobacteria</taxon>
        <taxon>Enterobacterales</taxon>
        <taxon>Enterobacteriaceae</taxon>
        <taxon>Escherichia</taxon>
    </lineage>
</organism>
<comment type="function">
    <text evidence="7">Toxin, which has some hemolytic activity towards mammalian cells. Acts by forming a pore-like structure upon contact with mammalian cells.</text>
</comment>
<comment type="subunit">
    <text evidence="8">Monomer and oligomer. In periplasm, it is present as a monomer, while in outer membrane vesicles, it oligomerizes to form a pore structure that is active. The pore is formed by a dodecamer.</text>
</comment>
<comment type="interaction">
    <interactant intactId="EBI-8516553">
        <id>P77335</id>
    </interactant>
    <interactant intactId="EBI-8516553">
        <id>P77335</id>
        <label>hlyE</label>
    </interactant>
    <organismsDiffer>false</organismsDiffer>
    <experiments>6</experiments>
</comment>
<comment type="subcellular location">
    <subcellularLocation>
        <location>Secreted</location>
    </subcellularLocation>
    <subcellularLocation>
        <location>Periplasm</location>
    </subcellularLocation>
    <subcellularLocation>
        <location evidence="9">Host cell membrane</location>
        <topology evidence="9">Single-pass membrane protein</topology>
    </subcellularLocation>
    <text>Exported from the cell by outer membrane vesicles. Also found in the periplasmic space.</text>
</comment>
<comment type="induction">
    <text evidence="2 5 6">During anaerobic growth. Weakly or not expressed in most strains. It is activated by SlyA, while it is silenced by H-NS. Its expression is also regulated by CRP and FNR.</text>
</comment>
<comment type="PTM">
    <text>In periplasm, it forms a disulfide bond between Cys-87 and Cys-285, which prevents the oligomerization. In outer membrane vesicles, the redox status prevents formation of the disulfide bond, leading to oligomerization and pore formation.</text>
</comment>
<comment type="mass spectrometry"/>
<comment type="similarity">
    <text evidence="9">Belongs to the hemolysin E family.</text>
</comment>
<comment type="sequence caution" evidence="9">
    <conflict type="erroneous initiation">
        <sequence resource="EMBL-CDS" id="AAB07048"/>
    </conflict>
    <text>Extended N-terminus.</text>
</comment>
<comment type="sequence caution" evidence="9">
    <conflict type="erroneous initiation">
        <sequence resource="EMBL-CDS" id="CAA67204"/>
    </conflict>
    <text>Extended N-terminus.</text>
</comment>
<evidence type="ECO:0000255" key="1"/>
<evidence type="ECO:0000269" key="2">
    <source>
    </source>
</evidence>
<evidence type="ECO:0000269" key="3">
    <source>
    </source>
</evidence>
<evidence type="ECO:0000269" key="4">
    <source>
    </source>
</evidence>
<evidence type="ECO:0000269" key="5">
    <source>
    </source>
</evidence>
<evidence type="ECO:0000269" key="6">
    <source>
    </source>
</evidence>
<evidence type="ECO:0000269" key="7">
    <source>
    </source>
</evidence>
<evidence type="ECO:0000269" key="8">
    <source>
    </source>
</evidence>
<evidence type="ECO:0000305" key="9"/>
<evidence type="ECO:0007829" key="10">
    <source>
        <dbReference type="PDB" id="4PHQ"/>
    </source>
</evidence>
<sequence>MTEIVADKTVEVVKNAIETADGALDLYNKYLDQVIPWQTFDETIKELSRFKQEYSQAASVLVGDIKTLLMDSQDKYFEATQTVYEWCGVATQLLAAYILLFDEYNEKKASAQKDILIKVLDDGITKLNEAQKSLLVSSQSFNNASGKLLALDSQLTNDFSEKSSYFQSQVDKIRKEAYAGAAAGVVAGPFGLIISYSIAAGVVEGKLIPELKNKLKSVQNFFTTLSNTVKQANKDIDAAKLKLTTEIAAIGEIKTETETTRFYVDYDDLMLSLLKEAAKKMINTCNEYQKRHGKKTLFEVPEV</sequence>
<reference key="1">
    <citation type="submission" date="1996-05" db="EMBL/GenBank/DDBJ databases">
        <authorList>
            <person name="McNamara P.J."/>
            <person name="Iandolo J.J."/>
            <person name="Uhlich G."/>
        </authorList>
    </citation>
    <scope>NUCLEOTIDE SEQUENCE [GENOMIC DNA]</scope>
    <source>
        <strain>K12 / XL1-Blue</strain>
    </source>
</reference>
<reference key="2">
    <citation type="journal article" date="1997" name="Mol. Microbiol.">
        <title>The Escherichia coli K-12 sheA gene encodes a 34-kDa secreted haemolysin.</title>
        <authorList>
            <person name="del Castillo F.J."/>
            <person name="Leal S.C."/>
            <person name="Moreno F."/>
            <person name="del Castillo I."/>
        </authorList>
    </citation>
    <scope>NUCLEOTIDE SEQUENCE [GENOMIC DNA]</scope>
    <source>
        <strain>K12</strain>
    </source>
</reference>
<reference key="3">
    <citation type="journal article" date="1999" name="Mol. Microbiol.">
        <title>Analysis of the SlyA-controlled expression, subcellular localization and pore-forming activity of a 34 kDa haemolysin (ClyA) from Escherichia coli K-12.</title>
        <authorList>
            <person name="Ludwig A."/>
            <person name="Bauer S."/>
            <person name="Benz R."/>
            <person name="Bergmann B."/>
            <person name="Goebel W."/>
        </authorList>
    </citation>
    <scope>NUCLEOTIDE SEQUENCE [GENOMIC DNA]</scope>
    <scope>PROTEIN SEQUENCE OF 2-13</scope>
    <scope>SUBCELLULAR LOCATION</scope>
    <scope>INDUCTION</scope>
    <source>
        <strain>K12</strain>
    </source>
</reference>
<reference key="4">
    <citation type="submission" date="1997-04" db="EMBL/GenBank/DDBJ databases">
        <authorList>
            <person name="Xing J."/>
            <person name="Fernandez S.V."/>
            <person name="Kapur V."/>
            <person name="Barletta R.G."/>
            <person name="Moxley R.A."/>
        </authorList>
    </citation>
    <scope>NUCLEOTIDE SEQUENCE [GENOMIC DNA]</scope>
    <source>
        <strain>3030-2</strain>
    </source>
</reference>
<reference key="5">
    <citation type="journal article" date="1996" name="DNA Res.">
        <title>A 718-kb DNA sequence of the Escherichia coli K-12 genome corresponding to the 12.7-28.0 min region on the linkage map.</title>
        <authorList>
            <person name="Oshima T."/>
            <person name="Aiba H."/>
            <person name="Baba T."/>
            <person name="Fujita K."/>
            <person name="Hayashi K."/>
            <person name="Honjo A."/>
            <person name="Ikemoto K."/>
            <person name="Inada T."/>
            <person name="Itoh T."/>
            <person name="Kajihara M."/>
            <person name="Kanai K."/>
            <person name="Kashimoto K."/>
            <person name="Kimura S."/>
            <person name="Kitagawa M."/>
            <person name="Makino K."/>
            <person name="Masuda S."/>
            <person name="Miki T."/>
            <person name="Mizobuchi K."/>
            <person name="Mori H."/>
            <person name="Motomura K."/>
            <person name="Nakamura Y."/>
            <person name="Nashimoto H."/>
            <person name="Nishio Y."/>
            <person name="Saito N."/>
            <person name="Sampei G."/>
            <person name="Seki Y."/>
            <person name="Tagami H."/>
            <person name="Takemoto K."/>
            <person name="Wada C."/>
            <person name="Yamamoto Y."/>
            <person name="Yano M."/>
            <person name="Horiuchi T."/>
        </authorList>
    </citation>
    <scope>NUCLEOTIDE SEQUENCE [LARGE SCALE GENOMIC DNA]</scope>
    <source>
        <strain>K12 / W3110 / ATCC 27325 / DSM 5911</strain>
    </source>
</reference>
<reference key="6">
    <citation type="journal article" date="1997" name="Science">
        <title>The complete genome sequence of Escherichia coli K-12.</title>
        <authorList>
            <person name="Blattner F.R."/>
            <person name="Plunkett G. III"/>
            <person name="Bloch C.A."/>
            <person name="Perna N.T."/>
            <person name="Burland V."/>
            <person name="Riley M."/>
            <person name="Collado-Vides J."/>
            <person name="Glasner J.D."/>
            <person name="Rode C.K."/>
            <person name="Mayhew G.F."/>
            <person name="Gregor J."/>
            <person name="Davis N.W."/>
            <person name="Kirkpatrick H.A."/>
            <person name="Goeden M.A."/>
            <person name="Rose D.J."/>
            <person name="Mau B."/>
            <person name="Shao Y."/>
        </authorList>
    </citation>
    <scope>NUCLEOTIDE SEQUENCE [LARGE SCALE GENOMIC DNA]</scope>
    <source>
        <strain>K12 / MG1655 / ATCC 47076</strain>
    </source>
</reference>
<reference key="7">
    <citation type="journal article" date="2006" name="Mol. Syst. Biol.">
        <title>Highly accurate genome sequences of Escherichia coli K-12 strains MG1655 and W3110.</title>
        <authorList>
            <person name="Hayashi K."/>
            <person name="Morooka N."/>
            <person name="Yamamoto Y."/>
            <person name="Fujita K."/>
            <person name="Isono K."/>
            <person name="Choi S."/>
            <person name="Ohtsubo E."/>
            <person name="Baba T."/>
            <person name="Wanner B.L."/>
            <person name="Mori H."/>
            <person name="Horiuchi T."/>
        </authorList>
    </citation>
    <scope>NUCLEOTIDE SEQUENCE [LARGE SCALE GENOMIC DNA]</scope>
    <source>
        <strain>K12 / W3110 / ATCC 27325 / DSM 5911</strain>
    </source>
</reference>
<reference key="8">
    <citation type="submission" date="2000-03" db="EMBL/GenBank/DDBJ databases">
        <authorList>
            <person name="Chang G.-N."/>
            <person name="Ho K.-C."/>
        </authorList>
    </citation>
    <scope>NUCLEOTIDE SEQUENCE [GENOMIC DNA]</scope>
    <source>
        <strain>CH9802</strain>
    </source>
</reference>
<reference key="9">
    <citation type="submission" date="1996-03" db="EMBL/GenBank/DDBJ databases">
        <authorList>
            <person name="King C.H."/>
            <person name="Shinnick T.M."/>
        </authorList>
    </citation>
    <scope>NUCLEOTIDE SEQUENCE [GENOMIC DNA] OF 1-296</scope>
    <source>
        <strain>K12 / XL1-Blue</strain>
    </source>
</reference>
<reference key="10">
    <citation type="submission" date="1994-08" db="EMBL/GenBank/DDBJ databases">
        <authorList>
            <person name="Woodgate R."/>
        </authorList>
    </citation>
    <scope>NUCLEOTIDE SEQUENCE [GENOMIC DNA] OF 1-156</scope>
    <source>
        <strain>K12 / AB1157</strain>
    </source>
</reference>
<reference key="11">
    <citation type="journal article" date="1999" name="Mol. Microbiol.">
        <title>Molecular analysis of the cytolytic protein ClyA (SheA) from Escherichia coli.</title>
        <authorList>
            <person name="Oscarsson J."/>
            <person name="Mizunoe Y."/>
            <person name="Li L."/>
            <person name="Lai X.-H."/>
            <person name="Wieslander A."/>
            <person name="Uhlin B.E."/>
        </authorList>
    </citation>
    <scope>PROTEIN SEQUENCE OF 2-18</scope>
    <scope>MUTAGENESIS OF 88-GLY--VAL-90; 143-ASN-ALA-144; 183-ALA-GLY-184; 187-ALA-GLY-188; ASP-268 AND 293-GLY-LYS-294</scope>
</reference>
<reference key="12">
    <citation type="journal article" date="2003" name="Cell">
        <title>Vesicle-mediated export and assembly of pore-forming oligomers of the enterobacterial clyA cytotoxin.</title>
        <authorList>
            <person name="Wai S.N."/>
            <person name="Lindmark B."/>
            <person name="Soederblom T."/>
            <person name="Takade A."/>
            <person name="Westermark M."/>
            <person name="Oscarsson J."/>
            <person name="Jass J."/>
            <person name="Richter-Dahlfors A."/>
            <person name="Mizunoe Y."/>
            <person name="Uhlin B.E."/>
        </authorList>
    </citation>
    <scope>PARTIAL PROTEIN SEQUENCE</scope>
    <scope>FUNCTION</scope>
    <scope>SUBCELLULAR LOCATION</scope>
    <scope>OLIGOMERIZATION</scope>
    <scope>DISULFIDE BOND FORMATION</scope>
</reference>
<reference key="13">
    <citation type="journal article" date="2000" name="J. Biol. Chem.">
        <title>Structure-function relationships of a novel bacterial toxin, hemolysin E. The role of alpha G.</title>
        <authorList>
            <person name="Atkins A."/>
            <person name="Wyborn N.R."/>
            <person name="Wallace A.J."/>
            <person name="Stillman T.J."/>
            <person name="Black L.K."/>
            <person name="Fielding A.B."/>
            <person name="Hisakado M."/>
            <person name="Artymiuk P.J."/>
            <person name="Green J."/>
        </authorList>
    </citation>
    <scope>MASS SPECTROMETRY</scope>
    <scope>DISULFIDE BOND</scope>
    <scope>MUTAGENESIS OF TYR-97; ASN-157; TYR-165 AND ARG-261</scope>
</reference>
<reference key="14">
    <citation type="journal article" date="2000" name="J. Bacteriol.">
        <title>Silencing and activation of ClyA cytotoxin expression in Escherichia coli.</title>
        <authorList>
            <person name="Westermark M."/>
            <person name="Oscarsson J."/>
            <person name="Mizunoe Y."/>
            <person name="Urbonaviciene J."/>
            <person name="Uhlin B.E."/>
        </authorList>
    </citation>
    <scope>INDUCTION</scope>
</reference>
<reference key="15">
    <citation type="journal article" date="2002" name="J. Bacteriol.">
        <title>Differential regulation of multiple proteins of Escherichia coli and Salmonella enterica serovar Typhimurium by the transcriptional regulator SlyA.</title>
        <authorList>
            <person name="Spory A."/>
            <person name="Bosserhoff A."/>
            <person name="von Rhein C."/>
            <person name="Goebel W."/>
            <person name="Ludwig A."/>
        </authorList>
    </citation>
    <scope>INDUCTION</scope>
</reference>
<reference key="16">
    <citation type="journal article" date="2003" name="J. Bacteriol.">
        <title>Characterization of dominantly negative mutant ClyA cytotoxin proteins in Escherichia coli.</title>
        <authorList>
            <person name="Wai S.N."/>
            <person name="Westermark M."/>
            <person name="Oscarsson J."/>
            <person name="Jass J."/>
            <person name="Maier E."/>
            <person name="Benz R."/>
            <person name="Uhlin B.E."/>
        </authorList>
    </citation>
    <scope>MUTANT PMWK16 DEL</scope>
</reference>
<reference key="17">
    <citation type="journal article" date="2000" name="Cell">
        <title>E. coli hemolysin E (HlyE, ClyA, SheA): X-ray crystal structure of the toxin and observation of membrane pores by electron microscopy.</title>
        <authorList>
            <person name="Wallace A.J."/>
            <person name="Stillman T.J."/>
            <person name="Atkins A."/>
            <person name="Jamieson S.J."/>
            <person name="Bullough P.A."/>
            <person name="Green J."/>
            <person name="Artymiuk P.J."/>
        </authorList>
    </citation>
    <scope>X-RAY CRYSTALLOGRAPHY (2.0 ANGSTROMS)</scope>
</reference>
<reference key="18">
    <citation type="journal article" date="2009" name="Nature">
        <title>The structure of a cytolytic alpha-helical toxin pore reveals its assembly mechanism.</title>
        <authorList>
            <person name="Mueller M."/>
            <person name="Grauschopf U."/>
            <person name="Maier T."/>
            <person name="Glockshuber R."/>
            <person name="Ban N."/>
        </authorList>
    </citation>
    <scope>X-RAY CRYSTALLOGRAPHY (3.29 ANGSTROMS)</scope>
    <scope>PORE FORMATION</scope>
    <scope>MEMBRANE TOPOLOGY</scope>
    <scope>SUBUNIT</scope>
</reference>
<proteinExistence type="evidence at protein level"/>
<keyword id="KW-0002">3D-structure</keyword>
<keyword id="KW-0204">Cytolysis</keyword>
<keyword id="KW-0903">Direct protein sequencing</keyword>
<keyword id="KW-1015">Disulfide bond</keyword>
<keyword id="KW-0354">Hemolysis</keyword>
<keyword id="KW-1032">Host cell membrane</keyword>
<keyword id="KW-1043">Host membrane</keyword>
<keyword id="KW-0472">Membrane</keyword>
<keyword id="KW-0574">Periplasm</keyword>
<keyword id="KW-1185">Reference proteome</keyword>
<keyword id="KW-0964">Secreted</keyword>
<keyword id="KW-0800">Toxin</keyword>
<keyword id="KW-0812">Transmembrane</keyword>
<keyword id="KW-1133">Transmembrane helix</keyword>
<keyword id="KW-0843">Virulence</keyword>
<gene>
    <name type="primary">hlyE</name>
    <name type="synonym">clyA</name>
    <name type="synonym">hpr</name>
    <name type="synonym">sheA</name>
    <name type="synonym">ycgD</name>
    <name type="ordered locus">b1182</name>
    <name type="ordered locus">JW5181</name>
</gene>
<dbReference type="EMBL" id="U57430">
    <property type="protein sequence ID" value="AAB07048.1"/>
    <property type="status" value="ALT_INIT"/>
    <property type="molecule type" value="Genomic_DNA"/>
</dbReference>
<dbReference type="EMBL" id="X98615">
    <property type="protein sequence ID" value="CAA67204.1"/>
    <property type="status" value="ALT_INIT"/>
    <property type="molecule type" value="Genomic_DNA"/>
</dbReference>
<dbReference type="EMBL" id="AJ001829">
    <property type="protein sequence ID" value="CAA05035.1"/>
    <property type="molecule type" value="Genomic_DNA"/>
</dbReference>
<dbReference type="EMBL" id="U73842">
    <property type="protein sequence ID" value="AAD04731.1"/>
    <property type="molecule type" value="Genomic_DNA"/>
</dbReference>
<dbReference type="EMBL" id="U00096">
    <property type="protein sequence ID" value="AAC74266.2"/>
    <property type="molecule type" value="Genomic_DNA"/>
</dbReference>
<dbReference type="EMBL" id="AP009048">
    <property type="protein sequence ID" value="BAA36016.2"/>
    <property type="molecule type" value="Genomic_DNA"/>
</dbReference>
<dbReference type="EMBL" id="AF240780">
    <property type="protein sequence ID" value="AAL55667.1"/>
    <property type="molecule type" value="Genomic_DNA"/>
</dbReference>
<dbReference type="EMBL" id="U22466">
    <property type="protein sequence ID" value="AAA92081.1"/>
    <property type="molecule type" value="Genomic_DNA"/>
</dbReference>
<dbReference type="EMBL" id="U13610">
    <property type="status" value="NOT_ANNOTATED_CDS"/>
    <property type="molecule type" value="Genomic_DNA"/>
</dbReference>
<dbReference type="PIR" id="C64864">
    <property type="entry name" value="C64864"/>
</dbReference>
<dbReference type="RefSeq" id="NP_415700.4">
    <property type="nucleotide sequence ID" value="NC_000913.3"/>
</dbReference>
<dbReference type="RefSeq" id="WP_001336523.1">
    <property type="nucleotide sequence ID" value="NZ_SSZK01000010.1"/>
</dbReference>
<dbReference type="PDB" id="1QOY">
    <property type="method" value="X-ray"/>
    <property type="resolution" value="2.00 A"/>
    <property type="chains" value="A=1-303"/>
</dbReference>
<dbReference type="PDB" id="2WCD">
    <property type="method" value="X-ray"/>
    <property type="resolution" value="3.29 A"/>
    <property type="chains" value="A/B/C/D/E/F/G/H/I/J/K/L/M/N/O/P/Q/R/S/T/U/V/W/X=2-303"/>
</dbReference>
<dbReference type="PDB" id="4PHO">
    <property type="method" value="X-ray"/>
    <property type="resolution" value="2.12 A"/>
    <property type="chains" value="A/B/C=2-303"/>
</dbReference>
<dbReference type="PDB" id="4PHQ">
    <property type="method" value="X-ray"/>
    <property type="resolution" value="1.94 A"/>
    <property type="chains" value="A/B/C/D=6-303"/>
</dbReference>
<dbReference type="PDB" id="6MRT">
    <property type="method" value="EM"/>
    <property type="resolution" value="2.80 A"/>
    <property type="chains" value="A/B/C/D/E/F/G/H/I/J/K/L=1-303"/>
</dbReference>
<dbReference type="PDB" id="6MRU">
    <property type="method" value="EM"/>
    <property type="resolution" value="3.20 A"/>
    <property type="chains" value="A/B/C/D/E/F/G/H/I/J/K/L/M=1-303"/>
</dbReference>
<dbReference type="PDB" id="6MRW">
    <property type="method" value="EM"/>
    <property type="resolution" value="4.30 A"/>
    <property type="chains" value="A/B/C/D/E/F/G/H/I/J/K/L/M/N=1-303"/>
</dbReference>
<dbReference type="PDBsum" id="1QOY"/>
<dbReference type="PDBsum" id="2WCD"/>
<dbReference type="PDBsum" id="4PHO"/>
<dbReference type="PDBsum" id="4PHQ"/>
<dbReference type="PDBsum" id="6MRT"/>
<dbReference type="PDBsum" id="6MRU"/>
<dbReference type="PDBsum" id="6MRW"/>
<dbReference type="EMDB" id="EMD-9212"/>
<dbReference type="EMDB" id="EMD-9213"/>
<dbReference type="EMDB" id="EMD-9214"/>
<dbReference type="SMR" id="P77335"/>
<dbReference type="BioGRID" id="4260100">
    <property type="interactions" value="10"/>
</dbReference>
<dbReference type="DIP" id="DIP-9915N"/>
<dbReference type="FunCoup" id="P77335">
    <property type="interactions" value="7"/>
</dbReference>
<dbReference type="MINT" id="P77335"/>
<dbReference type="STRING" id="511145.b1182"/>
<dbReference type="TCDB" id="1.C.10.1.1">
    <property type="family name" value="the pore-forming haemolysin e (hlye) family"/>
</dbReference>
<dbReference type="jPOST" id="P77335"/>
<dbReference type="PaxDb" id="511145-b1182"/>
<dbReference type="EnsemblBacteria" id="AAC74266">
    <property type="protein sequence ID" value="AAC74266"/>
    <property type="gene ID" value="b1182"/>
</dbReference>
<dbReference type="GeneID" id="945745"/>
<dbReference type="KEGG" id="ecj:JW5181"/>
<dbReference type="KEGG" id="eco:b1182"/>
<dbReference type="KEGG" id="ecoc:C3026_06965"/>
<dbReference type="PATRIC" id="fig|1411691.4.peg.1105"/>
<dbReference type="EchoBASE" id="EB3032"/>
<dbReference type="eggNOG" id="ENOG502ZB9A">
    <property type="taxonomic scope" value="Bacteria"/>
</dbReference>
<dbReference type="HOGENOM" id="CLU_080941_0_0_6"/>
<dbReference type="InParanoid" id="P77335"/>
<dbReference type="OMA" id="QSCDTDF"/>
<dbReference type="OrthoDB" id="6629132at2"/>
<dbReference type="BioCyc" id="EcoCyc:G6619-MONOMER"/>
<dbReference type="EvolutionaryTrace" id="P77335"/>
<dbReference type="PRO" id="PR:P77335"/>
<dbReference type="Proteomes" id="UP000000625">
    <property type="component" value="Chromosome"/>
</dbReference>
<dbReference type="GO" id="GO:0005576">
    <property type="term" value="C:extracellular region"/>
    <property type="evidence" value="ECO:0007669"/>
    <property type="project" value="UniProtKB-SubCell"/>
</dbReference>
<dbReference type="GO" id="GO:0020002">
    <property type="term" value="C:host cell plasma membrane"/>
    <property type="evidence" value="ECO:0007669"/>
    <property type="project" value="UniProtKB-SubCell"/>
</dbReference>
<dbReference type="GO" id="GO:0016020">
    <property type="term" value="C:membrane"/>
    <property type="evidence" value="ECO:0007669"/>
    <property type="project" value="UniProtKB-KW"/>
</dbReference>
<dbReference type="GO" id="GO:0042597">
    <property type="term" value="C:periplasmic space"/>
    <property type="evidence" value="ECO:0007669"/>
    <property type="project" value="UniProtKB-SubCell"/>
</dbReference>
<dbReference type="GO" id="GO:0042802">
    <property type="term" value="F:identical protein binding"/>
    <property type="evidence" value="ECO:0000353"/>
    <property type="project" value="IntAct"/>
</dbReference>
<dbReference type="GO" id="GO:0090729">
    <property type="term" value="F:toxin activity"/>
    <property type="evidence" value="ECO:0007669"/>
    <property type="project" value="UniProtKB-KW"/>
</dbReference>
<dbReference type="GO" id="GO:0044179">
    <property type="term" value="P:hemolysis in another organism"/>
    <property type="evidence" value="ECO:0007669"/>
    <property type="project" value="InterPro"/>
</dbReference>
<dbReference type="CDD" id="cd22651">
    <property type="entry name" value="HlyE-like"/>
    <property type="match status" value="1"/>
</dbReference>
<dbReference type="FunFam" id="1.20.1170.10:FF:000004">
    <property type="entry name" value="Hemolysin E, chromosomal"/>
    <property type="match status" value="1"/>
</dbReference>
<dbReference type="Gene3D" id="1.20.1170.10">
    <property type="match status" value="1"/>
</dbReference>
<dbReference type="InterPro" id="IPR027018">
    <property type="entry name" value="Hemolysin_E"/>
</dbReference>
<dbReference type="NCBIfam" id="NF008477">
    <property type="entry name" value="PRK11376.1"/>
    <property type="match status" value="1"/>
</dbReference>
<dbReference type="Pfam" id="PF06109">
    <property type="entry name" value="HlyE"/>
    <property type="match status" value="1"/>
</dbReference>
<dbReference type="SUPFAM" id="SSF58100">
    <property type="entry name" value="Bacterial hemolysins"/>
    <property type="match status" value="1"/>
</dbReference>
<name>HLYE_ECOLI</name>
<accession>P77335</accession>
<accession>Q47276</accession>
<accession>Q8VU70</accession>
<accession>Q9R3G4</accession>
<feature type="initiator methionine" description="Removed" evidence="2 3">
    <location>
        <position position="1"/>
    </location>
</feature>
<feature type="chain" id="PRO_0000083996" description="Hemolysin E, chromosomal">
    <location>
        <begin position="2"/>
        <end position="303"/>
    </location>
</feature>
<feature type="transmembrane region" description="Helical" evidence="1">
    <location>
        <begin position="183"/>
        <end position="203"/>
    </location>
</feature>
<feature type="disulfide bond" description="In monomeric form" evidence="4 7">
    <location>
        <begin position="87"/>
        <end position="285"/>
    </location>
</feature>
<feature type="sequence variant" description="In strain: CH9802.">
    <original>K</original>
    <variation>R</variation>
    <location>
        <position position="175"/>
    </location>
</feature>
<feature type="sequence variant" description="In strain: CH9802.">
    <original>G</original>
    <variation>A</variation>
    <location>
        <position position="201"/>
    </location>
</feature>
<feature type="mutagenesis site" description="Abolishes cytotoxic activity." evidence="3">
    <original>GVA</original>
    <variation>DVD</variation>
    <location>
        <begin position="88"/>
        <end position="90"/>
    </location>
</feature>
<feature type="mutagenesis site" description="Strongly reduces cytotoxic activity." evidence="4">
    <original>Y</original>
    <variation>H</variation>
    <location>
        <position position="97"/>
    </location>
</feature>
<feature type="mutagenesis site" description="Abolishes cytotoxic activity." evidence="3">
    <original>NA</original>
    <variation>DD</variation>
    <location>
        <begin position="143"/>
        <end position="144"/>
    </location>
</feature>
<feature type="mutagenesis site" description="Strongly reduces cytotoxic activity." evidence="4">
    <original>N</original>
    <variation>H</variation>
    <location>
        <position position="157"/>
    </location>
</feature>
<feature type="mutagenesis site" description="Strongly reduces cytotoxic activity." evidence="4">
    <original>Y</original>
    <variation>C</variation>
    <location>
        <position position="165"/>
    </location>
</feature>
<feature type="mutagenesis site" description="In PMWK16; retained in cytosol. Loss of function.">
    <location>
        <begin position="183"/>
        <end position="186"/>
    </location>
</feature>
<feature type="mutagenesis site" description="Abolishes cytotoxic activity." evidence="3">
    <original>AG</original>
    <variation>DD</variation>
    <location>
        <begin position="183"/>
        <end position="184"/>
    </location>
</feature>
<feature type="mutagenesis site" description="Abolishes cytotoxic activity." evidence="3">
    <original>AG</original>
    <variation>DD</variation>
    <location>
        <begin position="187"/>
        <end position="188"/>
    </location>
</feature>
<feature type="mutagenesis site" description="Strongly reduces cytotoxic activity." evidence="4">
    <original>R</original>
    <variation>K</variation>
    <location>
        <position position="261"/>
    </location>
</feature>
<feature type="mutagenesis site" description="Strongly reduces cytotoxic activity." evidence="3">
    <original>D</original>
    <variation>A</variation>
    <location>
        <position position="268"/>
    </location>
</feature>
<feature type="mutagenesis site" description="Strongly reduces cytotoxic activity." evidence="3">
    <original>GK</original>
    <variation>DA</variation>
    <location>
        <begin position="293"/>
        <end position="294"/>
    </location>
</feature>
<feature type="helix" evidence="10">
    <location>
        <begin position="7"/>
        <end position="28"/>
    </location>
</feature>
<feature type="helix" evidence="10">
    <location>
        <begin position="31"/>
        <end position="34"/>
    </location>
</feature>
<feature type="helix" evidence="10">
    <location>
        <begin position="37"/>
        <end position="46"/>
    </location>
</feature>
<feature type="turn" evidence="10">
    <location>
        <begin position="47"/>
        <end position="50"/>
    </location>
</feature>
<feature type="helix" evidence="10">
    <location>
        <begin position="51"/>
        <end position="53"/>
    </location>
</feature>
<feature type="helix" evidence="10">
    <location>
        <begin position="56"/>
        <end position="99"/>
    </location>
</feature>
<feature type="turn" evidence="10">
    <location>
        <begin position="100"/>
        <end position="103"/>
    </location>
</feature>
<feature type="helix" evidence="10">
    <location>
        <begin position="106"/>
        <end position="159"/>
    </location>
</feature>
<feature type="helix" evidence="10">
    <location>
        <begin position="164"/>
        <end position="179"/>
    </location>
</feature>
<feature type="strand" evidence="10">
    <location>
        <begin position="182"/>
        <end position="187"/>
    </location>
</feature>
<feature type="helix" evidence="10">
    <location>
        <begin position="189"/>
        <end position="191"/>
    </location>
</feature>
<feature type="strand" evidence="10">
    <location>
        <begin position="193"/>
        <end position="195"/>
    </location>
</feature>
<feature type="helix" evidence="10">
    <location>
        <begin position="196"/>
        <end position="199"/>
    </location>
</feature>
<feature type="helix" evidence="10">
    <location>
        <begin position="207"/>
        <end position="258"/>
    </location>
</feature>
<feature type="helix" evidence="10">
    <location>
        <begin position="268"/>
        <end position="291"/>
    </location>
</feature>